<reference key="1">
    <citation type="journal article" date="2000" name="Nature">
        <title>The genome sequence of the thermoacidophilic scavenger Thermoplasma acidophilum.</title>
        <authorList>
            <person name="Ruepp A."/>
            <person name="Graml W."/>
            <person name="Santos-Martinez M.-L."/>
            <person name="Koretke K.K."/>
            <person name="Volker C."/>
            <person name="Mewes H.-W."/>
            <person name="Frishman D."/>
            <person name="Stocker S."/>
            <person name="Lupas A.N."/>
            <person name="Baumeister W."/>
        </authorList>
    </citation>
    <scope>NUCLEOTIDE SEQUENCE [LARGE SCALE GENOMIC DNA]</scope>
    <source>
        <strain>ATCC 25905 / DSM 1728 / JCM 9062 / NBRC 15155 / AMRC-C165</strain>
    </source>
</reference>
<feature type="chain" id="PRO_0000151658" description="Arginine--tRNA ligase">
    <location>
        <begin position="1"/>
        <end position="546"/>
    </location>
</feature>
<feature type="short sequence motif" description="'HIGH' region">
    <location>
        <begin position="117"/>
        <end position="127"/>
    </location>
</feature>
<accession>Q9HLE7</accession>
<name>SYR_THEAC</name>
<protein>
    <recommendedName>
        <fullName evidence="1">Arginine--tRNA ligase</fullName>
        <ecNumber evidence="1">6.1.1.19</ecNumber>
    </recommendedName>
    <alternativeName>
        <fullName evidence="1">Arginyl-tRNA synthetase</fullName>
        <shortName evidence="1">ArgRS</shortName>
    </alternativeName>
</protein>
<evidence type="ECO:0000255" key="1">
    <source>
        <dbReference type="HAMAP-Rule" id="MF_00123"/>
    </source>
</evidence>
<comment type="catalytic activity">
    <reaction evidence="1">
        <text>tRNA(Arg) + L-arginine + ATP = L-arginyl-tRNA(Arg) + AMP + diphosphate</text>
        <dbReference type="Rhea" id="RHEA:20301"/>
        <dbReference type="Rhea" id="RHEA-COMP:9658"/>
        <dbReference type="Rhea" id="RHEA-COMP:9673"/>
        <dbReference type="ChEBI" id="CHEBI:30616"/>
        <dbReference type="ChEBI" id="CHEBI:32682"/>
        <dbReference type="ChEBI" id="CHEBI:33019"/>
        <dbReference type="ChEBI" id="CHEBI:78442"/>
        <dbReference type="ChEBI" id="CHEBI:78513"/>
        <dbReference type="ChEBI" id="CHEBI:456215"/>
        <dbReference type="EC" id="6.1.1.19"/>
    </reaction>
</comment>
<comment type="subcellular location">
    <subcellularLocation>
        <location evidence="1">Cytoplasm</location>
    </subcellularLocation>
</comment>
<comment type="similarity">
    <text evidence="1">Belongs to the class-I aminoacyl-tRNA synthetase family.</text>
</comment>
<sequence length="546" mass="63004">MLLFQDLRKDIYEIVSKRFRISENDVYLDDTGHSDITIRVFRILKSPDGGENAVMEIVRSISEKDYVEKALSEGGYINVWIKRTYMLREVLESIEKSGTYPDVFQEAERVSVEHTSANPTGPLHIGRARNSIIGDSIYRILSRYGYRTVRQYFVNDSGKQMISLYTAYIKYGGPITIENLLENYQKIYREMEKDQSIEKEIEKNIERYENADPEVFGTLRKIAGVMLDGIASTLKRIGIEFDEFDWESDLLLNGSVRKAIDMLETKEEDSARYIEISGKKVFLTRKDGTTLYFARDIAYHLFKAENSEWIIDVLGEDHKDHAKSLNHVLKEMLKLENRVSFMYYSFITLETGKMSTRRGNIVTLQDLVDRTYDEALKIVNEKRPDLSEEERKKIAEVIASSAVRYSIIRVSAPKPITFRWEEALNFESNSAPFIMYSHARAASILDKAPEPEQSYGMDMPKEEADLVKAMYVYPYYLKDAAQDLKPDLIAAYLISLVQKFNDFYGACRVIGTDPLTYARRIRIVKAYKQILSDAGDLIGIKMLDQM</sequence>
<gene>
    <name evidence="1" type="primary">argS</name>
    <name type="ordered locus">Ta0281</name>
</gene>
<keyword id="KW-0030">Aminoacyl-tRNA synthetase</keyword>
<keyword id="KW-0067">ATP-binding</keyword>
<keyword id="KW-0963">Cytoplasm</keyword>
<keyword id="KW-0436">Ligase</keyword>
<keyword id="KW-0547">Nucleotide-binding</keyword>
<keyword id="KW-0648">Protein biosynthesis</keyword>
<keyword id="KW-1185">Reference proteome</keyword>
<proteinExistence type="inferred from homology"/>
<dbReference type="EC" id="6.1.1.19" evidence="1"/>
<dbReference type="EMBL" id="AL445063">
    <property type="protein sequence ID" value="CAC11426.1"/>
    <property type="molecule type" value="Genomic_DNA"/>
</dbReference>
<dbReference type="RefSeq" id="WP_010900710.1">
    <property type="nucleotide sequence ID" value="NC_002578.1"/>
</dbReference>
<dbReference type="SMR" id="Q9HLE7"/>
<dbReference type="FunCoup" id="Q9HLE7">
    <property type="interactions" value="200"/>
</dbReference>
<dbReference type="STRING" id="273075.gene:9571498"/>
<dbReference type="PaxDb" id="273075-Ta0281"/>
<dbReference type="EnsemblBacteria" id="CAC11426">
    <property type="protein sequence ID" value="CAC11426"/>
    <property type="gene ID" value="CAC11426"/>
</dbReference>
<dbReference type="KEGG" id="tac:Ta0281"/>
<dbReference type="eggNOG" id="arCOG00487">
    <property type="taxonomic scope" value="Archaea"/>
</dbReference>
<dbReference type="HOGENOM" id="CLU_006406_6_1_2"/>
<dbReference type="InParanoid" id="Q9HLE7"/>
<dbReference type="OrthoDB" id="372102at2157"/>
<dbReference type="Proteomes" id="UP000001024">
    <property type="component" value="Chromosome"/>
</dbReference>
<dbReference type="GO" id="GO:0005737">
    <property type="term" value="C:cytoplasm"/>
    <property type="evidence" value="ECO:0007669"/>
    <property type="project" value="UniProtKB-SubCell"/>
</dbReference>
<dbReference type="GO" id="GO:0004814">
    <property type="term" value="F:arginine-tRNA ligase activity"/>
    <property type="evidence" value="ECO:0007669"/>
    <property type="project" value="UniProtKB-UniRule"/>
</dbReference>
<dbReference type="GO" id="GO:0005524">
    <property type="term" value="F:ATP binding"/>
    <property type="evidence" value="ECO:0007669"/>
    <property type="project" value="UniProtKB-UniRule"/>
</dbReference>
<dbReference type="GO" id="GO:0006420">
    <property type="term" value="P:arginyl-tRNA aminoacylation"/>
    <property type="evidence" value="ECO:0007669"/>
    <property type="project" value="UniProtKB-UniRule"/>
</dbReference>
<dbReference type="CDD" id="cd00671">
    <property type="entry name" value="ArgRS_core"/>
    <property type="match status" value="1"/>
</dbReference>
<dbReference type="Gene3D" id="3.30.1360.70">
    <property type="entry name" value="Arginyl tRNA synthetase N-terminal domain"/>
    <property type="match status" value="1"/>
</dbReference>
<dbReference type="Gene3D" id="3.40.50.620">
    <property type="entry name" value="HUPs"/>
    <property type="match status" value="1"/>
</dbReference>
<dbReference type="Gene3D" id="1.10.730.10">
    <property type="entry name" value="Isoleucyl-tRNA Synthetase, Domain 1"/>
    <property type="match status" value="1"/>
</dbReference>
<dbReference type="HAMAP" id="MF_00123">
    <property type="entry name" value="Arg_tRNA_synth"/>
    <property type="match status" value="1"/>
</dbReference>
<dbReference type="InterPro" id="IPR001278">
    <property type="entry name" value="Arg-tRNA-ligase"/>
</dbReference>
<dbReference type="InterPro" id="IPR036695">
    <property type="entry name" value="Arg-tRNA-synth_N_sf"/>
</dbReference>
<dbReference type="InterPro" id="IPR035684">
    <property type="entry name" value="ArgRS_core"/>
</dbReference>
<dbReference type="InterPro" id="IPR008909">
    <property type="entry name" value="DALR_anticod-bd"/>
</dbReference>
<dbReference type="InterPro" id="IPR014729">
    <property type="entry name" value="Rossmann-like_a/b/a_fold"/>
</dbReference>
<dbReference type="InterPro" id="IPR009080">
    <property type="entry name" value="tRNAsynth_Ia_anticodon-bd"/>
</dbReference>
<dbReference type="NCBIfam" id="TIGR00456">
    <property type="entry name" value="argS"/>
    <property type="match status" value="1"/>
</dbReference>
<dbReference type="PANTHER" id="PTHR11956:SF5">
    <property type="entry name" value="ARGININE--TRNA LIGASE, CYTOPLASMIC"/>
    <property type="match status" value="1"/>
</dbReference>
<dbReference type="PANTHER" id="PTHR11956">
    <property type="entry name" value="ARGINYL-TRNA SYNTHETASE"/>
    <property type="match status" value="1"/>
</dbReference>
<dbReference type="Pfam" id="PF05746">
    <property type="entry name" value="DALR_1"/>
    <property type="match status" value="1"/>
</dbReference>
<dbReference type="Pfam" id="PF00750">
    <property type="entry name" value="tRNA-synt_1d"/>
    <property type="match status" value="1"/>
</dbReference>
<dbReference type="PRINTS" id="PR01038">
    <property type="entry name" value="TRNASYNTHARG"/>
</dbReference>
<dbReference type="SMART" id="SM00836">
    <property type="entry name" value="DALR_1"/>
    <property type="match status" value="1"/>
</dbReference>
<dbReference type="SUPFAM" id="SSF47323">
    <property type="entry name" value="Anticodon-binding domain of a subclass of class I aminoacyl-tRNA synthetases"/>
    <property type="match status" value="1"/>
</dbReference>
<dbReference type="SUPFAM" id="SSF52374">
    <property type="entry name" value="Nucleotidylyl transferase"/>
    <property type="match status" value="1"/>
</dbReference>
<organism>
    <name type="scientific">Thermoplasma acidophilum (strain ATCC 25905 / DSM 1728 / JCM 9062 / NBRC 15155 / AMRC-C165)</name>
    <dbReference type="NCBI Taxonomy" id="273075"/>
    <lineage>
        <taxon>Archaea</taxon>
        <taxon>Methanobacteriati</taxon>
        <taxon>Thermoplasmatota</taxon>
        <taxon>Thermoplasmata</taxon>
        <taxon>Thermoplasmatales</taxon>
        <taxon>Thermoplasmataceae</taxon>
        <taxon>Thermoplasma</taxon>
    </lineage>
</organism>